<keyword id="KW-0002">3D-structure</keyword>
<keyword id="KW-0011">Acute phase</keyword>
<keyword id="KW-0094">Blood coagulation</keyword>
<keyword id="KW-0106">Calcium</keyword>
<keyword id="KW-0165">Cleavage on pair of basic residues</keyword>
<keyword id="KW-1015">Disulfide bond</keyword>
<keyword id="KW-0301">Gamma-carboxyglutamic acid</keyword>
<keyword id="KW-0325">Glycoprotein</keyword>
<keyword id="KW-0356">Hemostasis</keyword>
<keyword id="KW-0378">Hydrolase</keyword>
<keyword id="KW-0420">Kringle</keyword>
<keyword id="KW-0645">Protease</keyword>
<keyword id="KW-1185">Reference proteome</keyword>
<keyword id="KW-0677">Repeat</keyword>
<keyword id="KW-0720">Serine protease</keyword>
<keyword id="KW-0732">Signal</keyword>
<keyword id="KW-0865">Zymogen</keyword>
<evidence type="ECO:0000250" key="1"/>
<evidence type="ECO:0000250" key="2">
    <source>
        <dbReference type="UniProtKB" id="P00734"/>
    </source>
</evidence>
<evidence type="ECO:0000255" key="3"/>
<evidence type="ECO:0000255" key="4">
    <source>
        <dbReference type="PROSITE-ProRule" id="PRU00121"/>
    </source>
</evidence>
<evidence type="ECO:0000255" key="5">
    <source>
        <dbReference type="PROSITE-ProRule" id="PRU00274"/>
    </source>
</evidence>
<evidence type="ECO:0000255" key="6">
    <source>
        <dbReference type="PROSITE-ProRule" id="PRU00463"/>
    </source>
</evidence>
<evidence type="ECO:0000269" key="7">
    <source>
    </source>
</evidence>
<evidence type="ECO:0000269" key="8">
    <source>
    </source>
</evidence>
<evidence type="ECO:0000269" key="9">
    <source>
    </source>
</evidence>
<evidence type="ECO:0000269" key="10">
    <source>
    </source>
</evidence>
<evidence type="ECO:0007829" key="11">
    <source>
        <dbReference type="PDB" id="2PUX"/>
    </source>
</evidence>
<evidence type="ECO:0007829" key="12">
    <source>
        <dbReference type="PDB" id="3EDX"/>
    </source>
</evidence>
<evidence type="ECO:0007829" key="13">
    <source>
        <dbReference type="PDB" id="3HK3"/>
    </source>
</evidence>
<organism>
    <name type="scientific">Mus musculus</name>
    <name type="common">Mouse</name>
    <dbReference type="NCBI Taxonomy" id="10090"/>
    <lineage>
        <taxon>Eukaryota</taxon>
        <taxon>Metazoa</taxon>
        <taxon>Chordata</taxon>
        <taxon>Craniata</taxon>
        <taxon>Vertebrata</taxon>
        <taxon>Euteleostomi</taxon>
        <taxon>Mammalia</taxon>
        <taxon>Eutheria</taxon>
        <taxon>Euarchontoglires</taxon>
        <taxon>Glires</taxon>
        <taxon>Rodentia</taxon>
        <taxon>Myomorpha</taxon>
        <taxon>Muroidea</taxon>
        <taxon>Muridae</taxon>
        <taxon>Murinae</taxon>
        <taxon>Mus</taxon>
        <taxon>Mus</taxon>
    </lineage>
</organism>
<sequence length="618" mass="70269">MSHVRGLGLPGCLALAALVSLVHSQHVFLAPQQALSLLQRVRRANSGFLEELRKGNLERECVEEQCSYEEAFEALESPQDTDVFWAKYTVCDSVRKPRETFMDCLEGRCAMDLGVNYLGTVNVTHTGIQCQLWRSRYPHKPEINSTTHPGADLKENFCRNPDSSTTGPWCYTTDPTVRREECSVPVCGQEGRTTVVMTPRSGGSKDNLSPPLGQCLTERGRLYQGNLAVTTLGSPCLPWNSLPAKTLSKYQDFDPEVKLVENFCRNPDWDEEGAWCYVAGQPGDFEYCNLNYCEEAVGEENYDVDESIAGRTTDAEFHTFFNEKTFGLGEADCGLRPLFEKKSLKDTTEKELLDSYIDGRIVEGWDAEKGIAPWQVMLFRKSPQELLCGASLISDRWVLTAAHCILYPPWDKNFTENDLLVRIGKHSRTRYERNVEKISMLEKIYVHPRYNWRENLDRDIALLKLKKPVPFSDYIHPVCLPDKQTVTSLLRAGYKGRVTGWGNLRETWTTNINEIQPSVLQVVNLPIVERPVCKASTRIRITDNMFCAGFKVNDTKRGDACEGDSGGPFVMKSPFNNRWYQMGIVSWGEGCDRKGKYGFYTHVFRLKRWIQKVIDQFG</sequence>
<feature type="signal peptide" evidence="3">
    <location>
        <begin position="1"/>
        <end position="24"/>
    </location>
</feature>
<feature type="propeptide" id="PRO_0000028165">
    <location>
        <begin position="25"/>
        <end position="43"/>
    </location>
</feature>
<feature type="chain" id="PRO_0000028166" description="Prothrombin">
    <location>
        <begin position="44"/>
        <end position="618"/>
    </location>
</feature>
<feature type="peptide" id="PRO_0000028167" description="Activation peptide fragment 1">
    <location>
        <begin position="44"/>
        <end position="200"/>
    </location>
</feature>
<feature type="peptide" id="PRO_0000028168" description="Activation peptide fragment 2">
    <location>
        <begin position="201"/>
        <end position="324"/>
    </location>
</feature>
<feature type="chain" id="PRO_0000028169" description="Thrombin light chain">
    <location>
        <begin position="312"/>
        <end position="360"/>
    </location>
</feature>
<feature type="chain" id="PRO_0000028170" description="Thrombin heavy chain">
    <location>
        <begin position="361"/>
        <end position="618"/>
    </location>
</feature>
<feature type="domain" description="Gla" evidence="6">
    <location>
        <begin position="44"/>
        <end position="90"/>
    </location>
</feature>
<feature type="domain" description="Kringle 1" evidence="4">
    <location>
        <begin position="109"/>
        <end position="187"/>
    </location>
</feature>
<feature type="domain" description="Kringle 2" evidence="4">
    <location>
        <begin position="215"/>
        <end position="292"/>
    </location>
</feature>
<feature type="domain" description="Peptidase S1" evidence="5">
    <location>
        <begin position="361"/>
        <end position="615"/>
    </location>
</feature>
<feature type="region of interest" description="High affinity receptor-binding region which is also known as the TP508 peptide" evidence="1">
    <location>
        <begin position="548"/>
        <end position="570"/>
    </location>
</feature>
<feature type="active site" description="Charge relay system" evidence="1">
    <location>
        <position position="403"/>
    </location>
</feature>
<feature type="active site" description="Charge relay system" evidence="1">
    <location>
        <position position="459"/>
    </location>
</feature>
<feature type="active site" description="Charge relay system" evidence="1">
    <location>
        <position position="565"/>
    </location>
</feature>
<feature type="site" description="Cleavage; by thrombin">
    <location>
        <begin position="200"/>
        <end position="201"/>
    </location>
</feature>
<feature type="site" description="Cleavage; by factor Xa" evidence="2">
    <location>
        <begin position="311"/>
        <end position="312"/>
    </location>
</feature>
<feature type="site" description="Cleavage; by factor Xa" evidence="2">
    <location>
        <begin position="360"/>
        <end position="361"/>
    </location>
</feature>
<feature type="modified residue" description="4-carboxyglutamate" evidence="6 10">
    <location>
        <position position="50"/>
    </location>
</feature>
<feature type="modified residue" description="4-carboxyglutamate" evidence="6 10">
    <location>
        <position position="51"/>
    </location>
</feature>
<feature type="modified residue" description="4-carboxyglutamate" evidence="6 10">
    <location>
        <position position="58"/>
    </location>
</feature>
<feature type="modified residue" description="4-carboxyglutamate" evidence="6 10">
    <location>
        <position position="60"/>
    </location>
</feature>
<feature type="modified residue" description="4-carboxyglutamate" evidence="6 10">
    <location>
        <position position="63"/>
    </location>
</feature>
<feature type="modified residue" description="4-carboxyglutamate" evidence="6 10">
    <location>
        <position position="64"/>
    </location>
</feature>
<feature type="modified residue" description="4-carboxyglutamate" evidence="6 10">
    <location>
        <position position="69"/>
    </location>
</feature>
<feature type="modified residue" description="4-carboxyglutamate" evidence="6 10">
    <location>
        <position position="70"/>
    </location>
</feature>
<feature type="modified residue" description="4-carboxyglutamate" evidence="6 10">
    <location>
        <position position="73"/>
    </location>
</feature>
<feature type="modified residue" description="4-carboxyglutamate" evidence="6 10">
    <location>
        <position position="76"/>
    </location>
</feature>
<feature type="glycosylation site" description="N-linked (GlcNAc...) asparagine" evidence="7">
    <location>
        <position position="122"/>
    </location>
</feature>
<feature type="glycosylation site" description="N-linked (GlcNAc...) asparagine">
    <location>
        <position position="144"/>
    </location>
</feature>
<feature type="glycosylation site" description="N-linked (GlcNAc...) asparagine" evidence="7">
    <location>
        <position position="413"/>
    </location>
</feature>
<feature type="glycosylation site" description="N-linked (GlcNAc...) asparagine" evidence="7">
    <location>
        <position position="553"/>
    </location>
</feature>
<feature type="disulfide bond" evidence="1">
    <location>
        <begin position="61"/>
        <end position="66"/>
    </location>
</feature>
<feature type="disulfide bond" evidence="1">
    <location>
        <begin position="91"/>
        <end position="104"/>
    </location>
</feature>
<feature type="disulfide bond" evidence="1">
    <location>
        <begin position="109"/>
        <end position="187"/>
    </location>
</feature>
<feature type="disulfide bond" evidence="1">
    <location>
        <begin position="130"/>
        <end position="170"/>
    </location>
</feature>
<feature type="disulfide bond" evidence="1">
    <location>
        <begin position="158"/>
        <end position="182"/>
    </location>
</feature>
<feature type="disulfide bond" evidence="1">
    <location>
        <begin position="215"/>
        <end position="293"/>
    </location>
</feature>
<feature type="disulfide bond" evidence="1">
    <location>
        <begin position="236"/>
        <end position="276"/>
    </location>
</feature>
<feature type="disulfide bond" evidence="1">
    <location>
        <begin position="264"/>
        <end position="288"/>
    </location>
</feature>
<feature type="disulfide bond" description="Interchain (between light and heavy chains)" evidence="4 5 6">
    <location>
        <begin position="333"/>
        <end position="479"/>
    </location>
</feature>
<feature type="disulfide bond" evidence="8">
    <location>
        <begin position="388"/>
        <end position="404"/>
    </location>
</feature>
<feature type="disulfide bond" evidence="8">
    <location>
        <begin position="533"/>
        <end position="547"/>
    </location>
</feature>
<feature type="disulfide bond" evidence="8">
    <location>
        <begin position="561"/>
        <end position="591"/>
    </location>
</feature>
<feature type="mutagenesis site" description="Loss of protease activity." evidence="9">
    <original>S</original>
    <variation>A</variation>
    <location>
        <position position="565"/>
    </location>
</feature>
<feature type="helix" evidence="11">
    <location>
        <begin position="323"/>
        <end position="326"/>
    </location>
</feature>
<feature type="turn" evidence="13">
    <location>
        <begin position="331"/>
        <end position="334"/>
    </location>
</feature>
<feature type="turn" evidence="13">
    <location>
        <begin position="337"/>
        <end position="339"/>
    </location>
</feature>
<feature type="helix" evidence="13">
    <location>
        <begin position="340"/>
        <end position="342"/>
    </location>
</feature>
<feature type="helix" evidence="13">
    <location>
        <begin position="349"/>
        <end position="354"/>
    </location>
</feature>
<feature type="strand" evidence="13">
    <location>
        <begin position="375"/>
        <end position="380"/>
    </location>
</feature>
<feature type="turn" evidence="13">
    <location>
        <begin position="381"/>
        <end position="384"/>
    </location>
</feature>
<feature type="strand" evidence="13">
    <location>
        <begin position="385"/>
        <end position="400"/>
    </location>
</feature>
<feature type="helix" evidence="13">
    <location>
        <begin position="402"/>
        <end position="404"/>
    </location>
</feature>
<feature type="helix" evidence="13">
    <location>
        <begin position="408"/>
        <end position="410"/>
    </location>
</feature>
<feature type="helix" evidence="13">
    <location>
        <begin position="416"/>
        <end position="418"/>
    </location>
</feature>
<feature type="strand" evidence="13">
    <location>
        <begin position="419"/>
        <end position="424"/>
    </location>
</feature>
<feature type="strand" evidence="13">
    <location>
        <begin position="427"/>
        <end position="430"/>
    </location>
</feature>
<feature type="turn" evidence="13">
    <location>
        <begin position="433"/>
        <end position="435"/>
    </location>
</feature>
<feature type="strand" evidence="13">
    <location>
        <begin position="437"/>
        <end position="446"/>
    </location>
</feature>
<feature type="turn" evidence="13">
    <location>
        <begin position="452"/>
        <end position="454"/>
    </location>
</feature>
<feature type="strand" evidence="13">
    <location>
        <begin position="461"/>
        <end position="467"/>
    </location>
</feature>
<feature type="helix" evidence="13">
    <location>
        <begin position="483"/>
        <end position="489"/>
    </location>
</feature>
<feature type="strand" evidence="13">
    <location>
        <begin position="495"/>
        <end position="500"/>
    </location>
</feature>
<feature type="strand" evidence="11">
    <location>
        <begin position="504"/>
        <end position="507"/>
    </location>
</feature>
<feature type="helix" evidence="11">
    <location>
        <begin position="512"/>
        <end position="515"/>
    </location>
</feature>
<feature type="strand" evidence="13">
    <location>
        <begin position="521"/>
        <end position="527"/>
    </location>
</feature>
<feature type="helix" evidence="13">
    <location>
        <begin position="530"/>
        <end position="535"/>
    </location>
</feature>
<feature type="strand" evidence="13">
    <location>
        <begin position="545"/>
        <end position="548"/>
    </location>
</feature>
<feature type="strand" evidence="12">
    <location>
        <begin position="554"/>
        <end position="556"/>
    </location>
</feature>
<feature type="helix" evidence="13">
    <location>
        <begin position="562"/>
        <end position="564"/>
    </location>
</feature>
<feature type="strand" evidence="13">
    <location>
        <begin position="568"/>
        <end position="572"/>
    </location>
</feature>
<feature type="turn" evidence="13">
    <location>
        <begin position="574"/>
        <end position="576"/>
    </location>
</feature>
<feature type="strand" evidence="13">
    <location>
        <begin position="579"/>
        <end position="587"/>
    </location>
</feature>
<feature type="helix" evidence="13">
    <location>
        <begin position="591"/>
        <end position="593"/>
    </location>
</feature>
<feature type="strand" evidence="13">
    <location>
        <begin position="596"/>
        <end position="602"/>
    </location>
</feature>
<feature type="helix" evidence="13">
    <location>
        <begin position="604"/>
        <end position="606"/>
    </location>
</feature>
<feature type="helix" evidence="13">
    <location>
        <begin position="607"/>
        <end position="617"/>
    </location>
</feature>
<gene>
    <name type="primary">F2</name>
    <name type="synonym">Cf2</name>
</gene>
<dbReference type="EC" id="3.4.21.5"/>
<dbReference type="EMBL" id="X52308">
    <property type="protein sequence ID" value="CAA36548.1"/>
    <property type="molecule type" value="mRNA"/>
</dbReference>
<dbReference type="EMBL" id="BC013662">
    <property type="protein sequence ID" value="AAH13662.1"/>
    <property type="molecule type" value="mRNA"/>
</dbReference>
<dbReference type="EMBL" id="M81394">
    <property type="protein sequence ID" value="AAA40435.1"/>
    <property type="molecule type" value="mRNA"/>
</dbReference>
<dbReference type="CCDS" id="CCDS16434.1"/>
<dbReference type="PIR" id="A35827">
    <property type="entry name" value="A35827"/>
</dbReference>
<dbReference type="RefSeq" id="NP_034298.1">
    <property type="nucleotide sequence ID" value="NM_010168.4"/>
</dbReference>
<dbReference type="PDB" id="2OCV">
    <property type="method" value="X-ray"/>
    <property type="resolution" value="2.20 A"/>
    <property type="chains" value="A=319-346, B=361-618"/>
</dbReference>
<dbReference type="PDB" id="2PUX">
    <property type="method" value="X-ray"/>
    <property type="resolution" value="2.00 A"/>
    <property type="chains" value="A=317-360, B=361-618"/>
</dbReference>
<dbReference type="PDB" id="2PV9">
    <property type="method" value="X-ray"/>
    <property type="resolution" value="3.50 A"/>
    <property type="chains" value="A=317-360, B=361-618"/>
</dbReference>
<dbReference type="PDB" id="3EDX">
    <property type="method" value="X-ray"/>
    <property type="resolution" value="2.40 A"/>
    <property type="chains" value="A/C/E=317-360, B/D/F=361-618"/>
</dbReference>
<dbReference type="PDB" id="3HK3">
    <property type="method" value="X-ray"/>
    <property type="resolution" value="1.94 A"/>
    <property type="chains" value="A=317-360, B=361-618"/>
</dbReference>
<dbReference type="PDB" id="3HK6">
    <property type="method" value="X-ray"/>
    <property type="resolution" value="3.20 A"/>
    <property type="chains" value="A/C=317-360, B/D=361-618"/>
</dbReference>
<dbReference type="PDB" id="3HKI">
    <property type="method" value="X-ray"/>
    <property type="resolution" value="2.20 A"/>
    <property type="chains" value="A/D=317-360, B/E=361-618"/>
</dbReference>
<dbReference type="PDBsum" id="2OCV"/>
<dbReference type="PDBsum" id="2PUX"/>
<dbReference type="PDBsum" id="2PV9"/>
<dbReference type="PDBsum" id="3EDX"/>
<dbReference type="PDBsum" id="3HK3"/>
<dbReference type="PDBsum" id="3HK6"/>
<dbReference type="PDBsum" id="3HKI"/>
<dbReference type="SMR" id="P19221"/>
<dbReference type="BioGRID" id="199568">
    <property type="interactions" value="10"/>
</dbReference>
<dbReference type="DIP" id="DIP-60968N"/>
<dbReference type="FunCoup" id="P19221">
    <property type="interactions" value="784"/>
</dbReference>
<dbReference type="IntAct" id="P19221">
    <property type="interactions" value="6"/>
</dbReference>
<dbReference type="MINT" id="P19221"/>
<dbReference type="STRING" id="10090.ENSMUSP00000028681"/>
<dbReference type="BindingDB" id="P19221"/>
<dbReference type="ChEMBL" id="CHEMBL1075308"/>
<dbReference type="MEROPS" id="S01.217"/>
<dbReference type="GlyCosmos" id="P19221">
    <property type="glycosylation" value="4 sites, No reported glycans"/>
</dbReference>
<dbReference type="GlyGen" id="P19221">
    <property type="glycosylation" value="5 sites, 3 N-linked glycans (3 sites), 1 O-linked glycan (1 site)"/>
</dbReference>
<dbReference type="iPTMnet" id="P19221"/>
<dbReference type="PhosphoSitePlus" id="P19221"/>
<dbReference type="SwissPalm" id="P19221"/>
<dbReference type="CPTAC" id="non-CPTAC-3432"/>
<dbReference type="CPTAC" id="non-CPTAC-5620"/>
<dbReference type="jPOST" id="P19221"/>
<dbReference type="PaxDb" id="10090-ENSMUSP00000028681"/>
<dbReference type="PeptideAtlas" id="P19221"/>
<dbReference type="ProteomicsDB" id="259185"/>
<dbReference type="Antibodypedia" id="857">
    <property type="antibodies" value="1163 antibodies from 43 providers"/>
</dbReference>
<dbReference type="DNASU" id="14061"/>
<dbReference type="Ensembl" id="ENSMUST00000028681.15">
    <property type="protein sequence ID" value="ENSMUSP00000028681.9"/>
    <property type="gene ID" value="ENSMUSG00000027249.16"/>
</dbReference>
<dbReference type="GeneID" id="14061"/>
<dbReference type="KEGG" id="mmu:14061"/>
<dbReference type="UCSC" id="uc008kwg.2">
    <property type="organism name" value="mouse"/>
</dbReference>
<dbReference type="AGR" id="MGI:88380"/>
<dbReference type="CTD" id="2147"/>
<dbReference type="MGI" id="MGI:88380">
    <property type="gene designation" value="F2"/>
</dbReference>
<dbReference type="VEuPathDB" id="HostDB:ENSMUSG00000027249"/>
<dbReference type="eggNOG" id="ENOG502QTSX">
    <property type="taxonomic scope" value="Eukaryota"/>
</dbReference>
<dbReference type="GeneTree" id="ENSGT00940000154234"/>
<dbReference type="HOGENOM" id="CLU_006842_19_4_1"/>
<dbReference type="InParanoid" id="P19221"/>
<dbReference type="OMA" id="VMIFRKS"/>
<dbReference type="OrthoDB" id="6380398at2759"/>
<dbReference type="PhylomeDB" id="P19221"/>
<dbReference type="TreeFam" id="TF327329"/>
<dbReference type="Reactome" id="R-MMU-140837">
    <property type="pathway name" value="Intrinsic Pathway of Fibrin Clot Formation"/>
</dbReference>
<dbReference type="Reactome" id="R-MMU-140875">
    <property type="pathway name" value="Common Pathway of Fibrin Clot Formation"/>
</dbReference>
<dbReference type="Reactome" id="R-MMU-159740">
    <property type="pathway name" value="Gamma-carboxylation of protein precursors"/>
</dbReference>
<dbReference type="Reactome" id="R-MMU-159763">
    <property type="pathway name" value="Transport of gamma-carboxylated protein precursors from the endoplasmic reticulum to the Golgi apparatus"/>
</dbReference>
<dbReference type="Reactome" id="R-MMU-159782">
    <property type="pathway name" value="Removal of aminoterminal propeptides from gamma-carboxylated proteins"/>
</dbReference>
<dbReference type="Reactome" id="R-MMU-202733">
    <property type="pathway name" value="Cell surface interactions at the vascular wall"/>
</dbReference>
<dbReference type="Reactome" id="R-MMU-375276">
    <property type="pathway name" value="Peptide ligand-binding receptors"/>
</dbReference>
<dbReference type="Reactome" id="R-MMU-416476">
    <property type="pathway name" value="G alpha (q) signalling events"/>
</dbReference>
<dbReference type="Reactome" id="R-MMU-456926">
    <property type="pathway name" value="Thrombin signalling through proteinase activated receptors (PARs)"/>
</dbReference>
<dbReference type="Reactome" id="R-MMU-76009">
    <property type="pathway name" value="Platelet Aggregation (Plug Formation)"/>
</dbReference>
<dbReference type="Reactome" id="R-MMU-977606">
    <property type="pathway name" value="Regulation of Complement cascade"/>
</dbReference>
<dbReference type="BioGRID-ORCS" id="14061">
    <property type="hits" value="2 hits in 63 CRISPR screens"/>
</dbReference>
<dbReference type="ChiTaRS" id="F2">
    <property type="organism name" value="mouse"/>
</dbReference>
<dbReference type="EvolutionaryTrace" id="P19221"/>
<dbReference type="PRO" id="PR:P19221"/>
<dbReference type="Proteomes" id="UP000000589">
    <property type="component" value="Chromosome 2"/>
</dbReference>
<dbReference type="RNAct" id="P19221">
    <property type="molecule type" value="protein"/>
</dbReference>
<dbReference type="Bgee" id="ENSMUSG00000027249">
    <property type="expression patterns" value="Expressed in left lobe of liver and 54 other cell types or tissues"/>
</dbReference>
<dbReference type="ExpressionAtlas" id="P19221">
    <property type="expression patterns" value="baseline and differential"/>
</dbReference>
<dbReference type="GO" id="GO:0062023">
    <property type="term" value="C:collagen-containing extracellular matrix"/>
    <property type="evidence" value="ECO:0007005"/>
    <property type="project" value="BHF-UCL"/>
</dbReference>
<dbReference type="GO" id="GO:0009897">
    <property type="term" value="C:external side of plasma membrane"/>
    <property type="evidence" value="ECO:0007669"/>
    <property type="project" value="Ensembl"/>
</dbReference>
<dbReference type="GO" id="GO:0005615">
    <property type="term" value="C:extracellular space"/>
    <property type="evidence" value="ECO:0007669"/>
    <property type="project" value="Ensembl"/>
</dbReference>
<dbReference type="GO" id="GO:0005509">
    <property type="term" value="F:calcium ion binding"/>
    <property type="evidence" value="ECO:0007669"/>
    <property type="project" value="InterPro"/>
</dbReference>
<dbReference type="GO" id="GO:0004175">
    <property type="term" value="F:endopeptidase activity"/>
    <property type="evidence" value="ECO:0000315"/>
    <property type="project" value="MGI"/>
</dbReference>
<dbReference type="GO" id="GO:0008201">
    <property type="term" value="F:heparin binding"/>
    <property type="evidence" value="ECO:0007669"/>
    <property type="project" value="Ensembl"/>
</dbReference>
<dbReference type="GO" id="GO:0001530">
    <property type="term" value="F:lipopolysaccharide binding"/>
    <property type="evidence" value="ECO:0007669"/>
    <property type="project" value="Ensembl"/>
</dbReference>
<dbReference type="GO" id="GO:0008233">
    <property type="term" value="F:peptidase activity"/>
    <property type="evidence" value="ECO:0000315"/>
    <property type="project" value="MGI"/>
</dbReference>
<dbReference type="GO" id="GO:0048018">
    <property type="term" value="F:receptor ligand activity"/>
    <property type="evidence" value="ECO:0007669"/>
    <property type="project" value="Ensembl"/>
</dbReference>
<dbReference type="GO" id="GO:0004252">
    <property type="term" value="F:serine-type endopeptidase activity"/>
    <property type="evidence" value="ECO:0000314"/>
    <property type="project" value="MGI"/>
</dbReference>
<dbReference type="GO" id="GO:0070053">
    <property type="term" value="F:thrombospondin receptor activity"/>
    <property type="evidence" value="ECO:0007669"/>
    <property type="project" value="Ensembl"/>
</dbReference>
<dbReference type="GO" id="GO:0006953">
    <property type="term" value="P:acute-phase response"/>
    <property type="evidence" value="ECO:0007669"/>
    <property type="project" value="UniProtKB-KW"/>
</dbReference>
<dbReference type="GO" id="GO:0061844">
    <property type="term" value="P:antimicrobial humoral immune response mediated by antimicrobial peptide"/>
    <property type="evidence" value="ECO:0007669"/>
    <property type="project" value="Ensembl"/>
</dbReference>
<dbReference type="GO" id="GO:0007166">
    <property type="term" value="P:cell surface receptor signaling pathway"/>
    <property type="evidence" value="ECO:0007669"/>
    <property type="project" value="Ensembl"/>
</dbReference>
<dbReference type="GO" id="GO:0051838">
    <property type="term" value="P:cytolysis by host of symbiont cells"/>
    <property type="evidence" value="ECO:0007669"/>
    <property type="project" value="Ensembl"/>
</dbReference>
<dbReference type="GO" id="GO:0042730">
    <property type="term" value="P:fibrinolysis"/>
    <property type="evidence" value="ECO:0007669"/>
    <property type="project" value="Ensembl"/>
</dbReference>
<dbReference type="GO" id="GO:0007186">
    <property type="term" value="P:G protein-coupled receptor signaling pathway"/>
    <property type="evidence" value="ECO:0000314"/>
    <property type="project" value="MGI"/>
</dbReference>
<dbReference type="GO" id="GO:1990806">
    <property type="term" value="P:ligand-gated ion channel signaling pathway"/>
    <property type="evidence" value="ECO:0000314"/>
    <property type="project" value="MGI"/>
</dbReference>
<dbReference type="GO" id="GO:0048712">
    <property type="term" value="P:negative regulation of astrocyte differentiation"/>
    <property type="evidence" value="ECO:0007669"/>
    <property type="project" value="Ensembl"/>
</dbReference>
<dbReference type="GO" id="GO:1900016">
    <property type="term" value="P:negative regulation of cytokine production involved in inflammatory response"/>
    <property type="evidence" value="ECO:0007669"/>
    <property type="project" value="Ensembl"/>
</dbReference>
<dbReference type="GO" id="GO:0045861">
    <property type="term" value="P:negative regulation of proteolysis"/>
    <property type="evidence" value="ECO:0007669"/>
    <property type="project" value="Ensembl"/>
</dbReference>
<dbReference type="GO" id="GO:0070945">
    <property type="term" value="P:neutrophil-mediated killing of gram-negative bacterium"/>
    <property type="evidence" value="ECO:0007669"/>
    <property type="project" value="Ensembl"/>
</dbReference>
<dbReference type="GO" id="GO:0030168">
    <property type="term" value="P:platelet activation"/>
    <property type="evidence" value="ECO:0000314"/>
    <property type="project" value="MGI"/>
</dbReference>
<dbReference type="GO" id="GO:0030194">
    <property type="term" value="P:positive regulation of blood coagulation"/>
    <property type="evidence" value="ECO:0007669"/>
    <property type="project" value="Ensembl"/>
</dbReference>
<dbReference type="GO" id="GO:0030307">
    <property type="term" value="P:positive regulation of cell growth"/>
    <property type="evidence" value="ECO:0000316"/>
    <property type="project" value="MGI"/>
</dbReference>
<dbReference type="GO" id="GO:0008284">
    <property type="term" value="P:positive regulation of cell population proliferation"/>
    <property type="evidence" value="ECO:0000316"/>
    <property type="project" value="MGI"/>
</dbReference>
<dbReference type="GO" id="GO:0032967">
    <property type="term" value="P:positive regulation of collagen biosynthetic process"/>
    <property type="evidence" value="ECO:0007669"/>
    <property type="project" value="Ensembl"/>
</dbReference>
<dbReference type="GO" id="GO:0032024">
    <property type="term" value="P:positive regulation of insulin secretion"/>
    <property type="evidence" value="ECO:0000314"/>
    <property type="project" value="MGI"/>
</dbReference>
<dbReference type="GO" id="GO:0051897">
    <property type="term" value="P:positive regulation of phosphatidylinositol 3-kinase/protein kinase B signal transduction"/>
    <property type="evidence" value="ECO:0000316"/>
    <property type="project" value="MGI"/>
</dbReference>
<dbReference type="GO" id="GO:1900738">
    <property type="term" value="P:positive regulation of phospholipase C-activating G protein-coupled receptor signaling pathway"/>
    <property type="evidence" value="ECO:0007669"/>
    <property type="project" value="Ensembl"/>
</dbReference>
<dbReference type="GO" id="GO:1900182">
    <property type="term" value="P:positive regulation of protein localization to nucleus"/>
    <property type="evidence" value="ECO:0007669"/>
    <property type="project" value="Ensembl"/>
</dbReference>
<dbReference type="GO" id="GO:2000379">
    <property type="term" value="P:positive regulation of reactive oxygen species metabolic process"/>
    <property type="evidence" value="ECO:0007669"/>
    <property type="project" value="Ensembl"/>
</dbReference>
<dbReference type="GO" id="GO:0051281">
    <property type="term" value="P:positive regulation of release of sequestered calcium ion into cytosol"/>
    <property type="evidence" value="ECO:0007669"/>
    <property type="project" value="Ensembl"/>
</dbReference>
<dbReference type="GO" id="GO:0006508">
    <property type="term" value="P:proteolysis"/>
    <property type="evidence" value="ECO:0007669"/>
    <property type="project" value="UniProtKB-KW"/>
</dbReference>
<dbReference type="GO" id="GO:0008360">
    <property type="term" value="P:regulation of cell shape"/>
    <property type="evidence" value="ECO:0000316"/>
    <property type="project" value="MGI"/>
</dbReference>
<dbReference type="GO" id="GO:0051480">
    <property type="term" value="P:regulation of cytosolic calcium ion concentration"/>
    <property type="evidence" value="ECO:0007669"/>
    <property type="project" value="Ensembl"/>
</dbReference>
<dbReference type="GO" id="GO:0010468">
    <property type="term" value="P:regulation of gene expression"/>
    <property type="evidence" value="ECO:0000314"/>
    <property type="project" value="MGI"/>
</dbReference>
<dbReference type="GO" id="GO:0070493">
    <property type="term" value="P:thrombin-activated receptor signaling pathway"/>
    <property type="evidence" value="ECO:0000266"/>
    <property type="project" value="MGI"/>
</dbReference>
<dbReference type="CDD" id="cd00108">
    <property type="entry name" value="KR"/>
    <property type="match status" value="2"/>
</dbReference>
<dbReference type="CDD" id="cd00190">
    <property type="entry name" value="Tryp_SPc"/>
    <property type="match status" value="1"/>
</dbReference>
<dbReference type="FunFam" id="2.40.10.10:FF:000085">
    <property type="entry name" value="Prothrombin"/>
    <property type="match status" value="1"/>
</dbReference>
<dbReference type="FunFam" id="2.40.20.10:FF:000015">
    <property type="entry name" value="Prothrombin"/>
    <property type="match status" value="1"/>
</dbReference>
<dbReference type="FunFam" id="2.40.20.10:FF:000017">
    <property type="entry name" value="Prothrombin"/>
    <property type="match status" value="1"/>
</dbReference>
<dbReference type="FunFam" id="4.10.140.10:FF:000001">
    <property type="entry name" value="Prothrombin"/>
    <property type="match status" value="1"/>
</dbReference>
<dbReference type="FunFam" id="2.40.10.10:FF:000004">
    <property type="entry name" value="Tryptase gamma 1"/>
    <property type="match status" value="1"/>
</dbReference>
<dbReference type="FunFam" id="4.10.740.10:FF:000001">
    <property type="entry name" value="vitamin K-dependent protein S"/>
    <property type="match status" value="1"/>
</dbReference>
<dbReference type="Gene3D" id="2.40.20.10">
    <property type="entry name" value="Plasminogen Kringle 4"/>
    <property type="match status" value="2"/>
</dbReference>
<dbReference type="Gene3D" id="4.10.140.10">
    <property type="entry name" value="Thrombin light chain domain"/>
    <property type="match status" value="1"/>
</dbReference>
<dbReference type="Gene3D" id="2.40.10.10">
    <property type="entry name" value="Trypsin-like serine proteases"/>
    <property type="match status" value="2"/>
</dbReference>
<dbReference type="InterPro" id="IPR035972">
    <property type="entry name" value="GLA-like_dom_SF"/>
</dbReference>
<dbReference type="InterPro" id="IPR000294">
    <property type="entry name" value="GLA_domain"/>
</dbReference>
<dbReference type="InterPro" id="IPR000001">
    <property type="entry name" value="Kringle"/>
</dbReference>
<dbReference type="InterPro" id="IPR013806">
    <property type="entry name" value="Kringle-like"/>
</dbReference>
<dbReference type="InterPro" id="IPR018056">
    <property type="entry name" value="Kringle_CS"/>
</dbReference>
<dbReference type="InterPro" id="IPR038178">
    <property type="entry name" value="Kringle_sf"/>
</dbReference>
<dbReference type="InterPro" id="IPR009003">
    <property type="entry name" value="Peptidase_S1_PA"/>
</dbReference>
<dbReference type="InterPro" id="IPR043504">
    <property type="entry name" value="Peptidase_S1_PA_chymotrypsin"/>
</dbReference>
<dbReference type="InterPro" id="IPR001314">
    <property type="entry name" value="Peptidase_S1A"/>
</dbReference>
<dbReference type="InterPro" id="IPR003966">
    <property type="entry name" value="Prothrombin/thrombin"/>
</dbReference>
<dbReference type="InterPro" id="IPR051659">
    <property type="entry name" value="Serine_Protease_S1-Domain"/>
</dbReference>
<dbReference type="InterPro" id="IPR018992">
    <property type="entry name" value="Thrombin_light_chain"/>
</dbReference>
<dbReference type="InterPro" id="IPR037111">
    <property type="entry name" value="Thrombin_light_chain_sf"/>
</dbReference>
<dbReference type="InterPro" id="IPR001254">
    <property type="entry name" value="Trypsin_dom"/>
</dbReference>
<dbReference type="InterPro" id="IPR018114">
    <property type="entry name" value="TRYPSIN_HIS"/>
</dbReference>
<dbReference type="InterPro" id="IPR033116">
    <property type="entry name" value="TRYPSIN_SER"/>
</dbReference>
<dbReference type="PANTHER" id="PTHR24254">
    <property type="entry name" value="PROTHROMBIN"/>
    <property type="match status" value="1"/>
</dbReference>
<dbReference type="PANTHER" id="PTHR24254:SF10">
    <property type="entry name" value="PROTHROMBIN"/>
    <property type="match status" value="1"/>
</dbReference>
<dbReference type="Pfam" id="PF00594">
    <property type="entry name" value="Gla"/>
    <property type="match status" value="1"/>
</dbReference>
<dbReference type="Pfam" id="PF00051">
    <property type="entry name" value="Kringle"/>
    <property type="match status" value="2"/>
</dbReference>
<dbReference type="Pfam" id="PF09396">
    <property type="entry name" value="Thrombin_light"/>
    <property type="match status" value="1"/>
</dbReference>
<dbReference type="Pfam" id="PF00089">
    <property type="entry name" value="Trypsin"/>
    <property type="match status" value="1"/>
</dbReference>
<dbReference type="PIRSF" id="PIRSF001149">
    <property type="entry name" value="Thrombin"/>
    <property type="match status" value="1"/>
</dbReference>
<dbReference type="PRINTS" id="PR00722">
    <property type="entry name" value="CHYMOTRYPSIN"/>
</dbReference>
<dbReference type="PRINTS" id="PR00001">
    <property type="entry name" value="GLABLOOD"/>
</dbReference>
<dbReference type="PRINTS" id="PR00018">
    <property type="entry name" value="KRINGLE"/>
</dbReference>
<dbReference type="PRINTS" id="PR01505">
    <property type="entry name" value="PROTHROMBIN"/>
</dbReference>
<dbReference type="SMART" id="SM00069">
    <property type="entry name" value="GLA"/>
    <property type="match status" value="1"/>
</dbReference>
<dbReference type="SMART" id="SM00130">
    <property type="entry name" value="KR"/>
    <property type="match status" value="2"/>
</dbReference>
<dbReference type="SMART" id="SM00020">
    <property type="entry name" value="Tryp_SPc"/>
    <property type="match status" value="1"/>
</dbReference>
<dbReference type="SUPFAM" id="SSF57630">
    <property type="entry name" value="GLA-domain"/>
    <property type="match status" value="1"/>
</dbReference>
<dbReference type="SUPFAM" id="SSF57440">
    <property type="entry name" value="Kringle-like"/>
    <property type="match status" value="2"/>
</dbReference>
<dbReference type="SUPFAM" id="SSF50494">
    <property type="entry name" value="Trypsin-like serine proteases"/>
    <property type="match status" value="1"/>
</dbReference>
<dbReference type="PROSITE" id="PS00011">
    <property type="entry name" value="GLA_1"/>
    <property type="match status" value="1"/>
</dbReference>
<dbReference type="PROSITE" id="PS50998">
    <property type="entry name" value="GLA_2"/>
    <property type="match status" value="1"/>
</dbReference>
<dbReference type="PROSITE" id="PS00021">
    <property type="entry name" value="KRINGLE_1"/>
    <property type="match status" value="2"/>
</dbReference>
<dbReference type="PROSITE" id="PS50070">
    <property type="entry name" value="KRINGLE_2"/>
    <property type="match status" value="2"/>
</dbReference>
<dbReference type="PROSITE" id="PS50240">
    <property type="entry name" value="TRYPSIN_DOM"/>
    <property type="match status" value="1"/>
</dbReference>
<dbReference type="PROSITE" id="PS00134">
    <property type="entry name" value="TRYPSIN_HIS"/>
    <property type="match status" value="1"/>
</dbReference>
<dbReference type="PROSITE" id="PS00135">
    <property type="entry name" value="TRYPSIN_SER"/>
    <property type="match status" value="1"/>
</dbReference>
<accession>P19221</accession>
<comment type="function">
    <text evidence="1 2">Thrombin, which cleaves bonds after Arg and Lys, converts fibrinogen to fibrin and activates factors V, VII, VIII, XIII, and, in complex with thrombomodulin, protein C. Functions in blood homeostasis, inflammation and wound healing (By similarity). Activates coagulation factor XI (F11); activation is promoted by the contact with negatively charged surfaces (By similarity). Triggers the production of pro-inflammatory cytokines, such as MCP-1/CCL2 and IL8/CXCL8, in endothelial cells (By similarity).</text>
</comment>
<comment type="catalytic activity">
    <reaction>
        <text>Selective cleavage of Arg-|-Gly bonds in fibrinogen to form fibrin and release fibrinopeptides A and B.</text>
        <dbReference type="EC" id="3.4.21.5"/>
    </reaction>
</comment>
<comment type="activity regulation">
    <text evidence="2">Activity is promoted in the presence of negatively charged surfaces, such as polyphosphate and dextran sulfate (By similarity). Inhibited by SERPINA5 (By similarity).</text>
</comment>
<comment type="subunit">
    <text evidence="2">Heterodimer (named alpha-thrombin) of a light and a heavy chain; disulfide-linked. Forms a heterodimer with SERPINA5. In plasma, interacts (via N-terminus) with alpha-1-microglobulin; this interaction does not prevent the activation of prothrombin to thrombin.</text>
</comment>
<comment type="PTM">
    <text evidence="10">The gamma-carboxyglutamyl residues, which bind calcium ions, result from the carboxylation of glutamyl residues by a microsomal enzyme, the vitamin K-dependent carboxylase. The modified residues are necessary for the calcium-dependent interaction with a negatively charged phospholipid surface, which is essential for the conversion of prothrombin to thrombin.</text>
</comment>
<comment type="PTM">
    <text evidence="2">In the penultimate step of the coagulation cascade, prothrombin is converted to thrombin by the prothrombinase complex composed of factor Xa (F10), cofactor Va (F5), and phospholipids. This activation requires factor Xa-catalyzed sequential cleavage at 2 sites, Arg-311 and Arg-360, along 2 possible pathways. In the first pathway, the first cleavage occurs at Arg-311, leading to the formation of the inactive intermediate prethrombin-2. This pathway preferentially occurs on platelets and in the absence of cofactor Va. In the second pathway, the first cleavage occurs at Arg-360, which separates protease domain into 2 chains that remain connected through a disulfide bond and generates the active intermediate meizothrombin. The presence of cofactor Va directs activation along the meizothrombin pathway and greatly accelerates the rate of cleavage at Arg-360, but has a smaller effect on the cleavage of meizothrombin at Arg-311. Meizothrombin accumulates as an intermediate when prothrombinase is assembled on the membrane of red blood cells.</text>
</comment>
<comment type="miscellaneous">
    <text>Thrombin can itself cleave the N-terminal fragment (fragment 1) of the prothrombin, prior to its activation by factor Xa.</text>
</comment>
<comment type="similarity">
    <text evidence="5">Belongs to the peptidase S1 family.</text>
</comment>
<reference key="1">
    <citation type="journal article" date="1990" name="DNA Cell Biol.">
        <title>Characterization of the cDNA coding for mouse prothrombin and localization of the gene on mouse chromosome 2.</title>
        <authorList>
            <person name="Friezner Degen S.J."/>
            <person name="Schaffer L.A."/>
            <person name="Jamison C.S."/>
            <person name="Grant S.G."/>
            <person name="Fitzgibbon J.J."/>
            <person name="Pai J.-A."/>
            <person name="Chapman V.M."/>
            <person name="Elliott R.W."/>
        </authorList>
    </citation>
    <scope>NUCLEOTIDE SEQUENCE [MRNA]</scope>
    <scope>GAMMA-CARBOXYGLUTAMATION AT GLU-50; GLU-51; GLU-58; GLU-60; GLU-63; GLU-64; GLU-69; GLU-70; GLU-73 AND GLU-76</scope>
    <source>
        <strain>C57BL/6J</strain>
        <tissue>Liver</tissue>
    </source>
</reference>
<reference key="2">
    <citation type="journal article" date="2004" name="Genome Res.">
        <title>The status, quality, and expansion of the NIH full-length cDNA project: the Mammalian Gene Collection (MGC).</title>
        <authorList>
            <consortium name="The MGC Project Team"/>
        </authorList>
    </citation>
    <scope>NUCLEOTIDE SEQUENCE [LARGE SCALE MRNA]</scope>
    <source>
        <strain>FVB/N</strain>
        <tissue>Liver</tissue>
    </source>
</reference>
<reference key="3">
    <citation type="journal article" date="1992" name="Proc. Natl. Acad. Sci. U.S.A.">
        <title>Partial characterization of vertebrate prothrombin cDNAs: amplification and sequence analysis of the B chain of thrombin from nine different species.</title>
        <authorList>
            <person name="Banfield D.K."/>
            <person name="Macgillivray R.T."/>
        </authorList>
    </citation>
    <scope>NUCLEOTIDE SEQUENCE [MRNA] OF 384-618</scope>
    <source>
        <tissue>Liver</tissue>
    </source>
</reference>
<reference key="4">
    <citation type="journal article" date="2007" name="J. Proteome Res.">
        <title>Enhanced analysis of the mouse plasma proteome using cysteine-containing tryptic glycopeptides.</title>
        <authorList>
            <person name="Bernhard O.K."/>
            <person name="Kapp E.A."/>
            <person name="Simpson R.J."/>
        </authorList>
    </citation>
    <scope>GLYCOSYLATION [LARGE SCALE ANALYSIS] AT ASN-122; ASN-413 AND ASN-553</scope>
    <source>
        <strain>C57BL/6J</strain>
        <tissue>Plasma</tissue>
    </source>
</reference>
<reference key="5">
    <citation type="journal article" date="2010" name="Cell">
        <title>A tissue-specific atlas of mouse protein phosphorylation and expression.</title>
        <authorList>
            <person name="Huttlin E.L."/>
            <person name="Jedrychowski M.P."/>
            <person name="Elias J.E."/>
            <person name="Goswami T."/>
            <person name="Rad R."/>
            <person name="Beausoleil S.A."/>
            <person name="Villen J."/>
            <person name="Haas W."/>
            <person name="Sowa M.E."/>
            <person name="Gygi S.P."/>
        </authorList>
    </citation>
    <scope>IDENTIFICATION BY MASS SPECTROMETRY [LARGE SCALE ANALYSIS]</scope>
    <source>
        <tissue>Brown adipose tissue</tissue>
        <tissue>Heart</tissue>
        <tissue>Kidney</tissue>
        <tissue>Liver</tissue>
        <tissue>Lung</tissue>
        <tissue>Pancreas</tissue>
        <tissue>Spleen</tissue>
        <tissue>Testis</tissue>
    </source>
</reference>
<reference key="6">
    <citation type="journal article" date="2007" name="J. Biol. Chem.">
        <title>Structural basis of Na+ activation mimicry in murine thrombin.</title>
        <authorList>
            <person name="Marino F."/>
            <person name="Chen Z.-W."/>
            <person name="Ergenekan C.E."/>
            <person name="Bush-Pelc L.A."/>
            <person name="Mathews F.S."/>
            <person name="Di Cera E."/>
        </authorList>
    </citation>
    <scope>X-RAY CRYSTALLOGRAPHY (2.2 ANGSTROMS) OF 319-618</scope>
    <scope>DISULFIDE BONDS</scope>
</reference>
<reference key="7">
    <citation type="journal article" date="2007" name="Proc. Natl. Acad. Sci. U.S.A.">
        <title>Crystal structures of murine thrombin in complex with the extracellular fragments of murine protease-activated receptors PAR3 and PAR4.</title>
        <authorList>
            <person name="Bah A."/>
            <person name="Chen Z.-W."/>
            <person name="Bush-Pelc L.A."/>
            <person name="Mathews F.S."/>
            <person name="Di Cera E."/>
        </authorList>
    </citation>
    <scope>X-RAY CRYSTALLOGRAPHY (2.0 ANGSTROMS) OF 317-618 OF MUTANT ALA-565 IN COMPLEXES WITH PAR3/F2RL2 AND PAR4/F2RL3</scope>
    <scope>MUTAGENESIS OF SER-565</scope>
</reference>
<proteinExistence type="evidence at protein level"/>
<name>THRB_MOUSE</name>
<protein>
    <recommendedName>
        <fullName>Prothrombin</fullName>
        <ecNumber>3.4.21.5</ecNumber>
    </recommendedName>
    <alternativeName>
        <fullName>Coagulation factor II</fullName>
    </alternativeName>
    <component>
        <recommendedName>
            <fullName>Activation peptide fragment 1</fullName>
        </recommendedName>
    </component>
    <component>
        <recommendedName>
            <fullName>Activation peptide fragment 2</fullName>
        </recommendedName>
    </component>
    <component>
        <recommendedName>
            <fullName>Thrombin light chain</fullName>
        </recommendedName>
    </component>
    <component>
        <recommendedName>
            <fullName>Thrombin heavy chain</fullName>
        </recommendedName>
    </component>
</protein>